<gene>
    <name evidence="1" type="primary">nfuA</name>
    <name type="ordered locus">SPC_3581</name>
</gene>
<proteinExistence type="inferred from homology"/>
<protein>
    <recommendedName>
        <fullName evidence="1">Fe/S biogenesis protein NfuA</fullName>
    </recommendedName>
</protein>
<accession>C0Q0I7</accession>
<organism>
    <name type="scientific">Salmonella paratyphi C (strain RKS4594)</name>
    <dbReference type="NCBI Taxonomy" id="476213"/>
    <lineage>
        <taxon>Bacteria</taxon>
        <taxon>Pseudomonadati</taxon>
        <taxon>Pseudomonadota</taxon>
        <taxon>Gammaproteobacteria</taxon>
        <taxon>Enterobacterales</taxon>
        <taxon>Enterobacteriaceae</taxon>
        <taxon>Salmonella</taxon>
    </lineage>
</organism>
<comment type="function">
    <text evidence="1">Involved in iron-sulfur cluster biogenesis. Binds a 4Fe-4S cluster, can transfer this cluster to apoproteins, and thereby intervenes in the maturation of Fe/S proteins. Could also act as a scaffold/chaperone for damaged Fe/S proteins.</text>
</comment>
<comment type="cofactor">
    <cofactor evidence="1">
        <name>[4Fe-4S] cluster</name>
        <dbReference type="ChEBI" id="CHEBI:49883"/>
    </cofactor>
    <text evidence="1">Binds 1 [4Fe-4S] cluster per subunit. The cluster is presumably bound at the interface of two monomers.</text>
</comment>
<comment type="subunit">
    <text evidence="1">Homodimer.</text>
</comment>
<comment type="similarity">
    <text evidence="1">Belongs to the NfuA family.</text>
</comment>
<evidence type="ECO:0000255" key="1">
    <source>
        <dbReference type="HAMAP-Rule" id="MF_01637"/>
    </source>
</evidence>
<keyword id="KW-0004">4Fe-4S</keyword>
<keyword id="KW-0408">Iron</keyword>
<keyword id="KW-0411">Iron-sulfur</keyword>
<keyword id="KW-0479">Metal-binding</keyword>
<reference key="1">
    <citation type="journal article" date="2009" name="PLoS ONE">
        <title>Salmonella paratyphi C: genetic divergence from Salmonella choleraesuis and pathogenic convergence with Salmonella typhi.</title>
        <authorList>
            <person name="Liu W.-Q."/>
            <person name="Feng Y."/>
            <person name="Wang Y."/>
            <person name="Zou Q.-H."/>
            <person name="Chen F."/>
            <person name="Guo J.-T."/>
            <person name="Peng Y.-H."/>
            <person name="Jin Y."/>
            <person name="Li Y.-G."/>
            <person name="Hu S.-N."/>
            <person name="Johnston R.N."/>
            <person name="Liu G.-R."/>
            <person name="Liu S.-L."/>
        </authorList>
    </citation>
    <scope>NUCLEOTIDE SEQUENCE [LARGE SCALE GENOMIC DNA]</scope>
    <source>
        <strain>RKS4594</strain>
    </source>
</reference>
<dbReference type="EMBL" id="CP000857">
    <property type="protein sequence ID" value="ACN47664.1"/>
    <property type="molecule type" value="Genomic_DNA"/>
</dbReference>
<dbReference type="RefSeq" id="WP_000619387.1">
    <property type="nucleotide sequence ID" value="NC_012125.1"/>
</dbReference>
<dbReference type="SMR" id="C0Q0I7"/>
<dbReference type="GeneID" id="66757844"/>
<dbReference type="KEGG" id="sei:SPC_3581"/>
<dbReference type="HOGENOM" id="CLU_094569_0_0_6"/>
<dbReference type="Proteomes" id="UP000001599">
    <property type="component" value="Chromosome"/>
</dbReference>
<dbReference type="GO" id="GO:0051539">
    <property type="term" value="F:4 iron, 4 sulfur cluster binding"/>
    <property type="evidence" value="ECO:0007669"/>
    <property type="project" value="UniProtKB-UniRule"/>
</dbReference>
<dbReference type="GO" id="GO:0005506">
    <property type="term" value="F:iron ion binding"/>
    <property type="evidence" value="ECO:0007669"/>
    <property type="project" value="InterPro"/>
</dbReference>
<dbReference type="GO" id="GO:0016226">
    <property type="term" value="P:iron-sulfur cluster assembly"/>
    <property type="evidence" value="ECO:0007669"/>
    <property type="project" value="UniProtKB-UniRule"/>
</dbReference>
<dbReference type="GO" id="GO:0051604">
    <property type="term" value="P:protein maturation"/>
    <property type="evidence" value="ECO:0007669"/>
    <property type="project" value="UniProtKB-UniRule"/>
</dbReference>
<dbReference type="FunFam" id="2.60.300.12:FF:000004">
    <property type="entry name" value="Fe/S biogenesis protein NfuA"/>
    <property type="match status" value="1"/>
</dbReference>
<dbReference type="FunFam" id="3.30.300.130:FF:000002">
    <property type="entry name" value="Fe/S biogenesis protein NfuA"/>
    <property type="match status" value="1"/>
</dbReference>
<dbReference type="Gene3D" id="3.30.300.130">
    <property type="entry name" value="Fe-S cluster assembly (FSCA)"/>
    <property type="match status" value="1"/>
</dbReference>
<dbReference type="Gene3D" id="2.60.300.12">
    <property type="entry name" value="HesB-like domain"/>
    <property type="match status" value="1"/>
</dbReference>
<dbReference type="HAMAP" id="MF_01637">
    <property type="entry name" value="Fe_S_biogen_NfuA"/>
    <property type="match status" value="1"/>
</dbReference>
<dbReference type="InterPro" id="IPR017726">
    <property type="entry name" value="Fe/S_biogenesis_protein_NfuA"/>
</dbReference>
<dbReference type="InterPro" id="IPR000361">
    <property type="entry name" value="FeS_biogenesis"/>
</dbReference>
<dbReference type="InterPro" id="IPR034904">
    <property type="entry name" value="FSCA_dom_sf"/>
</dbReference>
<dbReference type="InterPro" id="IPR035903">
    <property type="entry name" value="HesB-like_dom_sf"/>
</dbReference>
<dbReference type="InterPro" id="IPR001075">
    <property type="entry name" value="NIF_FeS_clus_asmbl_NifU_C"/>
</dbReference>
<dbReference type="NCBIfam" id="NF008392">
    <property type="entry name" value="PRK11190.1"/>
    <property type="match status" value="1"/>
</dbReference>
<dbReference type="NCBIfam" id="TIGR03341">
    <property type="entry name" value="YhgI_GntY"/>
    <property type="match status" value="1"/>
</dbReference>
<dbReference type="PANTHER" id="PTHR11178:SF51">
    <property type="entry name" value="FE_S BIOGENESIS PROTEIN NFUA"/>
    <property type="match status" value="1"/>
</dbReference>
<dbReference type="PANTHER" id="PTHR11178">
    <property type="entry name" value="IRON-SULFUR CLUSTER SCAFFOLD PROTEIN NFU-RELATED"/>
    <property type="match status" value="1"/>
</dbReference>
<dbReference type="Pfam" id="PF01521">
    <property type="entry name" value="Fe-S_biosyn"/>
    <property type="match status" value="1"/>
</dbReference>
<dbReference type="Pfam" id="PF01106">
    <property type="entry name" value="NifU"/>
    <property type="match status" value="1"/>
</dbReference>
<dbReference type="SUPFAM" id="SSF117916">
    <property type="entry name" value="Fe-S cluster assembly (FSCA) domain-like"/>
    <property type="match status" value="1"/>
</dbReference>
<dbReference type="SUPFAM" id="SSF89360">
    <property type="entry name" value="HesB-like domain"/>
    <property type="match status" value="1"/>
</dbReference>
<sequence length="191" mass="20938">MIRISDAAQAHFAKLLANQEEGTQIRVFVINPGTPNAECGVSYCPPDAVEATDTALKFDLLTAYVDELSAPYLEDAEIDFVTDQLGSQLTLKAPNAKMRKVADDAPLMERVEYALQSQINPQLAGHGGRVSLMEITDEGYAILQFGGGCNGCSMVDVTLKEGIEKQLLNEFPELKGVRDLTEHQRGEHSYY</sequence>
<name>NFUA_SALPC</name>
<feature type="chain" id="PRO_1000186776" description="Fe/S biogenesis protein NfuA">
    <location>
        <begin position="1"/>
        <end position="191"/>
    </location>
</feature>
<feature type="binding site" evidence="1">
    <location>
        <position position="149"/>
    </location>
    <ligand>
        <name>[4Fe-4S] cluster</name>
        <dbReference type="ChEBI" id="CHEBI:49883"/>
    </ligand>
</feature>
<feature type="binding site" evidence="1">
    <location>
        <position position="152"/>
    </location>
    <ligand>
        <name>[4Fe-4S] cluster</name>
        <dbReference type="ChEBI" id="CHEBI:49883"/>
    </ligand>
</feature>